<organism>
    <name type="scientific">Methanocaldococcus jannaschii (strain ATCC 43067 / DSM 2661 / JAL-1 / JCM 10045 / NBRC 100440)</name>
    <name type="common">Methanococcus jannaschii</name>
    <dbReference type="NCBI Taxonomy" id="243232"/>
    <lineage>
        <taxon>Archaea</taxon>
        <taxon>Methanobacteriati</taxon>
        <taxon>Methanobacteriota</taxon>
        <taxon>Methanomada group</taxon>
        <taxon>Methanococci</taxon>
        <taxon>Methanococcales</taxon>
        <taxon>Methanocaldococcaceae</taxon>
        <taxon>Methanocaldococcus</taxon>
    </lineage>
</organism>
<sequence>MEFKIVNTICPYCGVGCGLGLVVKDGRVIGIHPNKRHPINEGKLCAKGNYCYQFIHSKDRLTKPLIKKESGFVETTWNKALEVIAENLKTYKDEIGFFSSARCTNEDNYILQKFARVALKTNNIDHCARLUHSATVTGMSACFGSGAMTNSIEDIELADCILIIGSNTFEQHPLIARRIMRAKDKGAKIIVIDPRRTITAKNSDIYLQIIPGTNVALINAMINVIIKENLIDKEFIKNRTEGFEKLKEIIKKYTPEYASKICGVDKELIIESAKIYGNAERASIIYCMGVTQFTHGVDAVKALCNLAMITGNIGKEGTGVNPLRGQNNVQGACDMGALPNVFPGYQKVEDGYKLFEEYWKTDLNPNSGLTIPEMIDESGKNIKFLYIMGENPIVSDPDVKHVEKALKSLDFLVVQDIFLTETAKLADVVLPAACWAEKDGTFTNTERRVQLIRKAVNPPGEALEDWIIIKKLAEKLGYGDKFNYNKVEDIFNEIRKVTPQYRGITYKRLKIDGIHWPCLDENHSGTKILHKDKFLTDNGRGKIFPVEYREVAELPDKDYPFILTTGRIIFHYHTGTMTRRCKNLVEEINEPFIEINPDDAKSLKIENGDLVKVISRRGEITAKARITEDIKKGVVFMPFHFVEANPNVLTNTALDELCKIPELKVCAVKIERI</sequence>
<feature type="chain" id="PRO_0000063226" description="F420-dependent formate dehydrogenase subunit alpha">
    <location>
        <begin position="1"/>
        <end position="673"/>
    </location>
</feature>
<feature type="domain" description="4Fe-4S Mo/W bis-MGD-type" evidence="3">
    <location>
        <begin position="3"/>
        <end position="59"/>
    </location>
</feature>
<feature type="binding site" evidence="3">
    <location>
        <position position="10"/>
    </location>
    <ligand>
        <name>[4Fe-4S] cluster</name>
        <dbReference type="ChEBI" id="CHEBI:49883"/>
    </ligand>
</feature>
<feature type="binding site" evidence="3">
    <location>
        <position position="13"/>
    </location>
    <ligand>
        <name>[4Fe-4S] cluster</name>
        <dbReference type="ChEBI" id="CHEBI:49883"/>
    </ligand>
</feature>
<feature type="binding site" evidence="3">
    <location>
        <position position="17"/>
    </location>
    <ligand>
        <name>[4Fe-4S] cluster</name>
        <dbReference type="ChEBI" id="CHEBI:49883"/>
    </ligand>
</feature>
<feature type="binding site" evidence="3">
    <location>
        <position position="45"/>
    </location>
    <ligand>
        <name>[4Fe-4S] cluster</name>
        <dbReference type="ChEBI" id="CHEBI:49883"/>
    </ligand>
</feature>
<feature type="non-standard amino acid" description="Selenocysteine" evidence="5">
    <location>
        <position position="131"/>
    </location>
</feature>
<comment type="function">
    <text evidence="1">Catalyzes the oxidation of formate to carbon dioxide, with coenzyme F420 as the electron acceptor.</text>
</comment>
<comment type="catalytic activity">
    <reaction evidence="1">
        <text>oxidized coenzyme F420-(gamma-L-Glu)(n) + formate + 2 H(+) = reduced coenzyme F420-(gamma-L-Glu)(n) + CO2</text>
        <dbReference type="Rhea" id="RHEA:42764"/>
        <dbReference type="Rhea" id="RHEA-COMP:12939"/>
        <dbReference type="Rhea" id="RHEA-COMP:14378"/>
        <dbReference type="ChEBI" id="CHEBI:15378"/>
        <dbReference type="ChEBI" id="CHEBI:15740"/>
        <dbReference type="ChEBI" id="CHEBI:16526"/>
        <dbReference type="ChEBI" id="CHEBI:133980"/>
        <dbReference type="ChEBI" id="CHEBI:139511"/>
        <dbReference type="EC" id="1.17.98.3"/>
    </reaction>
</comment>
<comment type="cofactor">
    <cofactor evidence="2">
        <name>[4Fe-4S] cluster</name>
        <dbReference type="ChEBI" id="CHEBI:49883"/>
    </cofactor>
    <text evidence="2">Binds 1 [4Fe-4S] cluster.</text>
</comment>
<comment type="cofactor">
    <cofactor evidence="1">
        <name>Mo-bis(molybdopterin guanine dinucleotide)</name>
        <dbReference type="ChEBI" id="CHEBI:60539"/>
    </cofactor>
    <text evidence="1">Binds 1 molybdenum-bis(molybdopterin guanine dinucleotide) (Mo-bis-MGD) cofactor per subunit.</text>
</comment>
<comment type="cofactor">
    <cofactor evidence="1">
        <name>Zn(2+)</name>
        <dbReference type="ChEBI" id="CHEBI:29105"/>
    </cofactor>
</comment>
<comment type="subunit">
    <text evidence="1">Dimer of an alpha (FdhA) and a beta (FdhB) subunit.</text>
</comment>
<comment type="similarity">
    <text evidence="4">Belongs to the prokaryotic molybdopterin-containing oxidoreductase family.</text>
</comment>
<gene>
    <name type="primary">fdhA</name>
    <name type="ordered locus">MJ1353</name>
</gene>
<reference key="1">
    <citation type="journal article" date="1996" name="Science">
        <title>Complete genome sequence of the methanogenic archaeon, Methanococcus jannaschii.</title>
        <authorList>
            <person name="Bult C.J."/>
            <person name="White O."/>
            <person name="Olsen G.J."/>
            <person name="Zhou L."/>
            <person name="Fleischmann R.D."/>
            <person name="Sutton G.G."/>
            <person name="Blake J.A."/>
            <person name="FitzGerald L.M."/>
            <person name="Clayton R.A."/>
            <person name="Gocayne J.D."/>
            <person name="Kerlavage A.R."/>
            <person name="Dougherty B.A."/>
            <person name="Tomb J.-F."/>
            <person name="Adams M.D."/>
            <person name="Reich C.I."/>
            <person name="Overbeek R."/>
            <person name="Kirkness E.F."/>
            <person name="Weinstock K.G."/>
            <person name="Merrick J.M."/>
            <person name="Glodek A."/>
            <person name="Scott J.L."/>
            <person name="Geoghagen N.S.M."/>
            <person name="Weidman J.F."/>
            <person name="Fuhrmann J.L."/>
            <person name="Nguyen D."/>
            <person name="Utterback T.R."/>
            <person name="Kelley J.M."/>
            <person name="Peterson J.D."/>
            <person name="Sadow P.W."/>
            <person name="Hanna M.C."/>
            <person name="Cotton M.D."/>
            <person name="Roberts K.M."/>
            <person name="Hurst M.A."/>
            <person name="Kaine B.P."/>
            <person name="Borodovsky M."/>
            <person name="Klenk H.-P."/>
            <person name="Fraser C.M."/>
            <person name="Smith H.O."/>
            <person name="Woese C.R."/>
            <person name="Venter J.C."/>
        </authorList>
    </citation>
    <scope>NUCLEOTIDE SEQUENCE [LARGE SCALE GENOMIC DNA]</scope>
    <source>
        <strain>ATCC 43067 / DSM 2661 / JAL-1 / JCM 10045 / NBRC 100440</strain>
    </source>
</reference>
<reference key="2">
    <citation type="journal article" date="1997" name="J. Mol. Biol.">
        <title>Selenoprotein synthesis in archaea: identification of an mRNA element of Methanococcus jannaschii probably directing selenocysteine insertion.</title>
        <authorList>
            <person name="Wilting R."/>
            <person name="Schorling S."/>
            <person name="Persson B.C."/>
            <person name="Boeck A."/>
        </authorList>
    </citation>
    <scope>PROBABLE SELENOCYSTEINE AT SEC-131</scope>
</reference>
<dbReference type="EC" id="1.17.98.3" evidence="1"/>
<dbReference type="EMBL" id="L77117">
    <property type="status" value="NOT_ANNOTATED_CDS"/>
    <property type="molecule type" value="Genomic_DNA"/>
</dbReference>
<dbReference type="RefSeq" id="WP_083774551.1">
    <property type="nucleotide sequence ID" value="NC_000909.1"/>
</dbReference>
<dbReference type="FunCoup" id="P61159">
    <property type="interactions" value="186"/>
</dbReference>
<dbReference type="GeneID" id="1452608"/>
<dbReference type="InParanoid" id="P61159"/>
<dbReference type="OrthoDB" id="23466at2157"/>
<dbReference type="PhylomeDB" id="P61159"/>
<dbReference type="Proteomes" id="UP000000805">
    <property type="component" value="Chromosome"/>
</dbReference>
<dbReference type="GO" id="GO:0016020">
    <property type="term" value="C:membrane"/>
    <property type="evidence" value="ECO:0000318"/>
    <property type="project" value="GO_Central"/>
</dbReference>
<dbReference type="GO" id="GO:0051539">
    <property type="term" value="F:4 iron, 4 sulfur cluster binding"/>
    <property type="evidence" value="ECO:0007669"/>
    <property type="project" value="UniProtKB-KW"/>
</dbReference>
<dbReference type="GO" id="GO:0043794">
    <property type="term" value="F:formate dehydrogenase (coenzyme F420) activity"/>
    <property type="evidence" value="ECO:0007669"/>
    <property type="project" value="RHEA"/>
</dbReference>
<dbReference type="GO" id="GO:0008863">
    <property type="term" value="F:formate dehydrogenase (NAD+) activity"/>
    <property type="evidence" value="ECO:0007669"/>
    <property type="project" value="UniProtKB-EC"/>
</dbReference>
<dbReference type="GO" id="GO:0046872">
    <property type="term" value="F:metal ion binding"/>
    <property type="evidence" value="ECO:0007669"/>
    <property type="project" value="UniProtKB-KW"/>
</dbReference>
<dbReference type="GO" id="GO:0043546">
    <property type="term" value="F:molybdopterin cofactor binding"/>
    <property type="evidence" value="ECO:0007669"/>
    <property type="project" value="InterPro"/>
</dbReference>
<dbReference type="GO" id="GO:0015942">
    <property type="term" value="P:formate metabolic process"/>
    <property type="evidence" value="ECO:0007669"/>
    <property type="project" value="InterPro"/>
</dbReference>
<dbReference type="GO" id="GO:0022904">
    <property type="term" value="P:respiratory electron transport chain"/>
    <property type="evidence" value="ECO:0000318"/>
    <property type="project" value="GO_Central"/>
</dbReference>
<dbReference type="CDD" id="cd02790">
    <property type="entry name" value="MopB_CT_Formate-Dh_H"/>
    <property type="match status" value="1"/>
</dbReference>
<dbReference type="CDD" id="cd02753">
    <property type="entry name" value="MopB_Formate-Dh-H"/>
    <property type="match status" value="1"/>
</dbReference>
<dbReference type="FunFam" id="2.20.25.90:FF:000006">
    <property type="entry name" value="Formate dehydrogenase alpha subunit"/>
    <property type="match status" value="1"/>
</dbReference>
<dbReference type="FunFam" id="3.40.228.10:FF:000002">
    <property type="entry name" value="Formate dehydrogenase subunit alpha"/>
    <property type="match status" value="1"/>
</dbReference>
<dbReference type="FunFam" id="2.40.40.20:FF:000005">
    <property type="entry name" value="Periplasmic nitrate reductase"/>
    <property type="match status" value="1"/>
</dbReference>
<dbReference type="Gene3D" id="2.40.40.20">
    <property type="match status" value="1"/>
</dbReference>
<dbReference type="Gene3D" id="3.40.50.740">
    <property type="match status" value="1"/>
</dbReference>
<dbReference type="Gene3D" id="2.20.25.90">
    <property type="entry name" value="ADC-like domains"/>
    <property type="match status" value="1"/>
</dbReference>
<dbReference type="Gene3D" id="3.40.228.10">
    <property type="entry name" value="Dimethylsulfoxide Reductase, domain 2"/>
    <property type="match status" value="1"/>
</dbReference>
<dbReference type="InterPro" id="IPR009010">
    <property type="entry name" value="Asp_de-COase-like_dom_sf"/>
</dbReference>
<dbReference type="InterPro" id="IPR041925">
    <property type="entry name" value="CT_Formate-Dh_H"/>
</dbReference>
<dbReference type="InterPro" id="IPR041924">
    <property type="entry name" value="Formate_Dh-H_N"/>
</dbReference>
<dbReference type="InterPro" id="IPR006478">
    <property type="entry name" value="Formate_DH_asu"/>
</dbReference>
<dbReference type="InterPro" id="IPR006657">
    <property type="entry name" value="MoPterin_dinucl-bd_dom"/>
</dbReference>
<dbReference type="InterPro" id="IPR006656">
    <property type="entry name" value="Mopterin_OxRdtase"/>
</dbReference>
<dbReference type="InterPro" id="IPR006963">
    <property type="entry name" value="Mopterin_OxRdtase_4Fe-4S_dom"/>
</dbReference>
<dbReference type="InterPro" id="IPR006655">
    <property type="entry name" value="Mopterin_OxRdtase_prok_CS"/>
</dbReference>
<dbReference type="InterPro" id="IPR027467">
    <property type="entry name" value="MopterinOxRdtase_cofactor_BS"/>
</dbReference>
<dbReference type="InterPro" id="IPR050123">
    <property type="entry name" value="Prok_molybdopt-oxidoreductase"/>
</dbReference>
<dbReference type="NCBIfam" id="TIGR01591">
    <property type="entry name" value="Fdh-alpha"/>
    <property type="match status" value="1"/>
</dbReference>
<dbReference type="PANTHER" id="PTHR43105:SF14">
    <property type="entry name" value="FORMATE DEHYDROGENASE H"/>
    <property type="match status" value="1"/>
</dbReference>
<dbReference type="PANTHER" id="PTHR43105">
    <property type="entry name" value="RESPIRATORY NITRATE REDUCTASE"/>
    <property type="match status" value="1"/>
</dbReference>
<dbReference type="Pfam" id="PF04879">
    <property type="entry name" value="Molybdop_Fe4S4"/>
    <property type="match status" value="1"/>
</dbReference>
<dbReference type="Pfam" id="PF00384">
    <property type="entry name" value="Molybdopterin"/>
    <property type="match status" value="1"/>
</dbReference>
<dbReference type="Pfam" id="PF01568">
    <property type="entry name" value="Molydop_binding"/>
    <property type="match status" value="1"/>
</dbReference>
<dbReference type="SMART" id="SM00926">
    <property type="entry name" value="Molybdop_Fe4S4"/>
    <property type="match status" value="1"/>
</dbReference>
<dbReference type="SUPFAM" id="SSF50692">
    <property type="entry name" value="ADC-like"/>
    <property type="match status" value="1"/>
</dbReference>
<dbReference type="SUPFAM" id="SSF53706">
    <property type="entry name" value="Formate dehydrogenase/DMSO reductase, domains 1-3"/>
    <property type="match status" value="1"/>
</dbReference>
<dbReference type="PROSITE" id="PS51669">
    <property type="entry name" value="4FE4S_MOW_BIS_MGD"/>
    <property type="match status" value="1"/>
</dbReference>
<dbReference type="PROSITE" id="PS00551">
    <property type="entry name" value="MOLYBDOPTERIN_PROK_1"/>
    <property type="match status" value="1"/>
</dbReference>
<dbReference type="PROSITE" id="PS00490">
    <property type="entry name" value="MOLYBDOPTERIN_PROK_2"/>
    <property type="match status" value="1"/>
</dbReference>
<proteinExistence type="inferred from homology"/>
<protein>
    <recommendedName>
        <fullName evidence="1">F420-dependent formate dehydrogenase subunit alpha</fullName>
        <ecNumber evidence="1">1.17.98.3</ecNumber>
    </recommendedName>
</protein>
<name>FDHA_METJA</name>
<accession>P61159</accession>
<evidence type="ECO:0000250" key="1">
    <source>
        <dbReference type="UniProtKB" id="P06131"/>
    </source>
</evidence>
<evidence type="ECO:0000250" key="2">
    <source>
        <dbReference type="UniProtKB" id="P07658"/>
    </source>
</evidence>
<evidence type="ECO:0000255" key="3">
    <source>
        <dbReference type="PROSITE-ProRule" id="PRU01004"/>
    </source>
</evidence>
<evidence type="ECO:0000305" key="4"/>
<evidence type="ECO:0000305" key="5">
    <source>
    </source>
</evidence>
<keyword id="KW-0004">4Fe-4S</keyword>
<keyword id="KW-0408">Iron</keyword>
<keyword id="KW-0411">Iron-sulfur</keyword>
<keyword id="KW-0479">Metal-binding</keyword>
<keyword id="KW-0500">Molybdenum</keyword>
<keyword id="KW-0560">Oxidoreductase</keyword>
<keyword id="KW-1185">Reference proteome</keyword>
<keyword id="KW-0712">Selenocysteine</keyword>
<keyword id="KW-0862">Zinc</keyword>